<sequence length="27" mass="2824">MIIGAVEAGGTKFVDGVGNEKGEIFER</sequence>
<keyword id="KW-0067">ATP-binding</keyword>
<keyword id="KW-0119">Carbohydrate metabolism</keyword>
<keyword id="KW-0903">Direct protein sequencing</keyword>
<keyword id="KW-0418">Kinase</keyword>
<keyword id="KW-0460">Magnesium</keyword>
<keyword id="KW-0479">Metal-binding</keyword>
<keyword id="KW-0547">Nucleotide-binding</keyword>
<keyword id="KW-0808">Transferase</keyword>
<keyword id="KW-0862">Zinc</keyword>
<name>SCRK_FUSMR</name>
<proteinExistence type="evidence at protein level"/>
<dbReference type="EC" id="2.7.1.4"/>
<dbReference type="SMR" id="Q09123"/>
<dbReference type="SABIO-RK" id="Q09123"/>
<dbReference type="GO" id="GO:0005524">
    <property type="term" value="F:ATP binding"/>
    <property type="evidence" value="ECO:0007669"/>
    <property type="project" value="UniProtKB-KW"/>
</dbReference>
<dbReference type="GO" id="GO:0008865">
    <property type="term" value="F:fructokinase activity"/>
    <property type="evidence" value="ECO:0000314"/>
    <property type="project" value="UniProtKB"/>
</dbReference>
<dbReference type="GO" id="GO:0046872">
    <property type="term" value="F:metal ion binding"/>
    <property type="evidence" value="ECO:0000314"/>
    <property type="project" value="UniProtKB"/>
</dbReference>
<dbReference type="GO" id="GO:0016052">
    <property type="term" value="P:carbohydrate catabolic process"/>
    <property type="evidence" value="ECO:0000314"/>
    <property type="project" value="UniProtKB"/>
</dbReference>
<accession>Q09123</accession>
<evidence type="ECO:0000250" key="1">
    <source>
        <dbReference type="UniProtKB" id="O05510"/>
    </source>
</evidence>
<evidence type="ECO:0000269" key="2">
    <source>
    </source>
</evidence>
<evidence type="ECO:0000303" key="3">
    <source>
    </source>
</evidence>
<evidence type="ECO:0000305" key="4"/>
<feature type="chain" id="PRO_0000095682" description="Fructokinase">
    <location>
        <begin position="1"/>
        <end position="27" status="greater than"/>
    </location>
</feature>
<feature type="non-terminal residue" evidence="3">
    <location>
        <position position="27"/>
    </location>
</feature>
<protein>
    <recommendedName>
        <fullName>Fructokinase</fullName>
        <ecNumber>2.7.1.4</ecNumber>
    </recommendedName>
</protein>
<gene>
    <name evidence="1" type="primary">scrK</name>
</gene>
<reference evidence="4" key="1">
    <citation type="journal article" date="1992" name="J. Bacteriol.">
        <title>Sucrose fermentation by Fusobacterium mortiferum ATCC 25557: transport, catabolism, and products.</title>
        <authorList>
            <person name="Thompson J."/>
            <person name="Nguyen N.Y."/>
            <person name="Robrish S.A."/>
        </authorList>
    </citation>
    <scope>PROTEIN SEQUENCE</scope>
    <scope>CATALYTIC ACTIVITY</scope>
    <scope>COFACTOR</scope>
    <scope>BIOPHYSICOCHEMICAL PROPERTIES</scope>
    <scope>SUBUNIT</scope>
    <scope>INDUCTION</scope>
    <source>
        <strain>ATCC 25557 / DSM 19809 / CCUG 14475 / VPI 4123A</strain>
    </source>
</reference>
<organism>
    <name type="scientific">Fusobacterium mortiferum</name>
    <dbReference type="NCBI Taxonomy" id="850"/>
    <lineage>
        <taxon>Bacteria</taxon>
        <taxon>Fusobacteriati</taxon>
        <taxon>Fusobacteriota</taxon>
        <taxon>Fusobacteriia</taxon>
        <taxon>Fusobacteriales</taxon>
        <taxon>Fusobacteriaceae</taxon>
        <taxon>Fusobacterium</taxon>
    </lineage>
</organism>
<comment type="catalytic activity">
    <reaction evidence="2">
        <text>D-fructose + ATP = D-fructose 6-phosphate + ADP + H(+)</text>
        <dbReference type="Rhea" id="RHEA:16125"/>
        <dbReference type="ChEBI" id="CHEBI:15378"/>
        <dbReference type="ChEBI" id="CHEBI:30616"/>
        <dbReference type="ChEBI" id="CHEBI:37721"/>
        <dbReference type="ChEBI" id="CHEBI:61527"/>
        <dbReference type="ChEBI" id="CHEBI:456216"/>
        <dbReference type="EC" id="2.7.1.4"/>
    </reaction>
</comment>
<comment type="cofactor">
    <cofactor evidence="2">
        <name>Mg(2+)</name>
        <dbReference type="ChEBI" id="CHEBI:18420"/>
    </cofactor>
    <text evidence="2">Divalent metal cations. Maximum activity was observed with Mg(2+).</text>
</comment>
<comment type="activity regulation">
    <text evidence="1 4">Inhibition by zinc ions.</text>
</comment>
<comment type="biophysicochemical properties">
    <kinetics>
        <KM evidence="2">0.1 mM for ATP</KM>
        <KM evidence="2">1.8 mM for magnesium</KM>
        <KM evidence="2">0.4 mM for fructose</KM>
        <Vmax evidence="2">74.0 umol/min/mg enzyme for fructose 6-phosphate</Vmax>
    </kinetics>
    <phDependence>
        <text evidence="2">Optimum pH is 6.5-7.5.</text>
    </phDependence>
</comment>
<comment type="subunit">
    <text evidence="2">Homodimer.</text>
</comment>
<comment type="induction">
    <text evidence="2">Induced by sucrose.</text>
</comment>
<comment type="similarity">
    <text evidence="4">Belongs to the ROK (NagC/XylR) family.</text>
</comment>